<accession>B0RXN7</accession>
<organism>
    <name type="scientific">Xanthomonas campestris pv. campestris (strain B100)</name>
    <dbReference type="NCBI Taxonomy" id="509169"/>
    <lineage>
        <taxon>Bacteria</taxon>
        <taxon>Pseudomonadati</taxon>
        <taxon>Pseudomonadota</taxon>
        <taxon>Gammaproteobacteria</taxon>
        <taxon>Lysobacterales</taxon>
        <taxon>Lysobacteraceae</taxon>
        <taxon>Xanthomonas</taxon>
    </lineage>
</organism>
<sequence>MSTNDNWYIEHFQPTGSAIGYRISGKLDEVQSPFQKIEIYQTTDWGKLMIIDGAVMLTSRDNFFYHEMISHPALFTHAAPKRVVIIGGGDCGTLREVLKHPGVESATQCDIDEQVTRMSEKYFPELCDSNDDARAELLFDDGVAYMANCPAGSVDIVIVDSTDPVGPAEGLFNKSFYESCFKALKDDGILVQQSESPLALLDLIKEMRTEMGKAGFQSFKTLPFPQPCYPTGWWSVTMASKQANADFAFRQADAQAKGFDTLYYTAHLHTGVLVAPPFVAKALGE</sequence>
<name>SPEE_XANCB</name>
<feature type="chain" id="PRO_1000099306" description="Polyamine aminopropyltransferase">
    <location>
        <begin position="1"/>
        <end position="285"/>
    </location>
</feature>
<feature type="domain" description="PABS" evidence="1">
    <location>
        <begin position="5"/>
        <end position="241"/>
    </location>
</feature>
<feature type="active site" description="Proton acceptor" evidence="1">
    <location>
        <position position="160"/>
    </location>
</feature>
<feature type="binding site" evidence="1">
    <location>
        <position position="35"/>
    </location>
    <ligand>
        <name>S-methyl-5'-thioadenosine</name>
        <dbReference type="ChEBI" id="CHEBI:17509"/>
    </ligand>
</feature>
<feature type="binding site" evidence="1">
    <location>
        <position position="66"/>
    </location>
    <ligand>
        <name>spermidine</name>
        <dbReference type="ChEBI" id="CHEBI:57834"/>
    </ligand>
</feature>
<feature type="binding site" evidence="1">
    <location>
        <position position="90"/>
    </location>
    <ligand>
        <name>spermidine</name>
        <dbReference type="ChEBI" id="CHEBI:57834"/>
    </ligand>
</feature>
<feature type="binding site" evidence="1">
    <location>
        <position position="110"/>
    </location>
    <ligand>
        <name>S-methyl-5'-thioadenosine</name>
        <dbReference type="ChEBI" id="CHEBI:17509"/>
    </ligand>
</feature>
<feature type="binding site" evidence="1">
    <location>
        <begin position="141"/>
        <end position="142"/>
    </location>
    <ligand>
        <name>S-methyl-5'-thioadenosine</name>
        <dbReference type="ChEBI" id="CHEBI:17509"/>
    </ligand>
</feature>
<feature type="binding site" evidence="1">
    <location>
        <begin position="160"/>
        <end position="163"/>
    </location>
    <ligand>
        <name>spermidine</name>
        <dbReference type="ChEBI" id="CHEBI:57834"/>
    </ligand>
</feature>
<feature type="binding site" evidence="1">
    <location>
        <position position="167"/>
    </location>
    <ligand>
        <name>S-methyl-5'-thioadenosine</name>
        <dbReference type="ChEBI" id="CHEBI:17509"/>
    </ligand>
</feature>
<dbReference type="EC" id="2.5.1.16" evidence="1"/>
<dbReference type="EMBL" id="AM920689">
    <property type="protein sequence ID" value="CAP53423.1"/>
    <property type="molecule type" value="Genomic_DNA"/>
</dbReference>
<dbReference type="SMR" id="B0RXN7"/>
<dbReference type="KEGG" id="xca:xcc-b100_4056"/>
<dbReference type="HOGENOM" id="CLU_048199_0_0_6"/>
<dbReference type="UniPathway" id="UPA00248">
    <property type="reaction ID" value="UER00314"/>
</dbReference>
<dbReference type="Proteomes" id="UP000001188">
    <property type="component" value="Chromosome"/>
</dbReference>
<dbReference type="GO" id="GO:0005829">
    <property type="term" value="C:cytosol"/>
    <property type="evidence" value="ECO:0007669"/>
    <property type="project" value="TreeGrafter"/>
</dbReference>
<dbReference type="GO" id="GO:0004766">
    <property type="term" value="F:spermidine synthase activity"/>
    <property type="evidence" value="ECO:0007669"/>
    <property type="project" value="UniProtKB-UniRule"/>
</dbReference>
<dbReference type="GO" id="GO:0008295">
    <property type="term" value="P:spermidine biosynthetic process"/>
    <property type="evidence" value="ECO:0007669"/>
    <property type="project" value="UniProtKB-UniRule"/>
</dbReference>
<dbReference type="CDD" id="cd02440">
    <property type="entry name" value="AdoMet_MTases"/>
    <property type="match status" value="1"/>
</dbReference>
<dbReference type="FunFam" id="3.40.50.150:FF:000290">
    <property type="entry name" value="Polyamine aminopropyltransferase"/>
    <property type="match status" value="1"/>
</dbReference>
<dbReference type="Gene3D" id="2.30.140.10">
    <property type="entry name" value="Spermidine synthase, tetramerisation domain"/>
    <property type="match status" value="1"/>
</dbReference>
<dbReference type="Gene3D" id="3.40.50.150">
    <property type="entry name" value="Vaccinia Virus protein VP39"/>
    <property type="match status" value="1"/>
</dbReference>
<dbReference type="HAMAP" id="MF_00198">
    <property type="entry name" value="Spermidine_synth"/>
    <property type="match status" value="1"/>
</dbReference>
<dbReference type="InterPro" id="IPR030374">
    <property type="entry name" value="PABS"/>
</dbReference>
<dbReference type="InterPro" id="IPR030373">
    <property type="entry name" value="PABS_CS"/>
</dbReference>
<dbReference type="InterPro" id="IPR029063">
    <property type="entry name" value="SAM-dependent_MTases_sf"/>
</dbReference>
<dbReference type="InterPro" id="IPR001045">
    <property type="entry name" value="Spermi_synthase"/>
</dbReference>
<dbReference type="InterPro" id="IPR035246">
    <property type="entry name" value="Spermidine_synt_N"/>
</dbReference>
<dbReference type="InterPro" id="IPR037163">
    <property type="entry name" value="Spermidine_synt_N_sf"/>
</dbReference>
<dbReference type="NCBIfam" id="NF002010">
    <property type="entry name" value="PRK00811.1"/>
    <property type="match status" value="1"/>
</dbReference>
<dbReference type="NCBIfam" id="TIGR00417">
    <property type="entry name" value="speE"/>
    <property type="match status" value="1"/>
</dbReference>
<dbReference type="PANTHER" id="PTHR11558:SF11">
    <property type="entry name" value="SPERMIDINE SYNTHASE"/>
    <property type="match status" value="1"/>
</dbReference>
<dbReference type="PANTHER" id="PTHR11558">
    <property type="entry name" value="SPERMIDINE/SPERMINE SYNTHASE"/>
    <property type="match status" value="1"/>
</dbReference>
<dbReference type="Pfam" id="PF17284">
    <property type="entry name" value="Spermine_synt_N"/>
    <property type="match status" value="1"/>
</dbReference>
<dbReference type="Pfam" id="PF01564">
    <property type="entry name" value="Spermine_synth"/>
    <property type="match status" value="1"/>
</dbReference>
<dbReference type="SUPFAM" id="SSF53335">
    <property type="entry name" value="S-adenosyl-L-methionine-dependent methyltransferases"/>
    <property type="match status" value="1"/>
</dbReference>
<dbReference type="PROSITE" id="PS01330">
    <property type="entry name" value="PABS_1"/>
    <property type="match status" value="1"/>
</dbReference>
<dbReference type="PROSITE" id="PS51006">
    <property type="entry name" value="PABS_2"/>
    <property type="match status" value="1"/>
</dbReference>
<evidence type="ECO:0000255" key="1">
    <source>
        <dbReference type="HAMAP-Rule" id="MF_00198"/>
    </source>
</evidence>
<proteinExistence type="inferred from homology"/>
<gene>
    <name evidence="1" type="primary">speE</name>
    <name type="ordered locus">xcc-b100_4056</name>
</gene>
<reference key="1">
    <citation type="journal article" date="2008" name="J. Biotechnol.">
        <title>The genome of Xanthomonas campestris pv. campestris B100 and its use for the reconstruction of metabolic pathways involved in xanthan biosynthesis.</title>
        <authorList>
            <person name="Vorhoelter F.-J."/>
            <person name="Schneiker S."/>
            <person name="Goesmann A."/>
            <person name="Krause L."/>
            <person name="Bekel T."/>
            <person name="Kaiser O."/>
            <person name="Linke B."/>
            <person name="Patschkowski T."/>
            <person name="Rueckert C."/>
            <person name="Schmid J."/>
            <person name="Sidhu V.K."/>
            <person name="Sieber V."/>
            <person name="Tauch A."/>
            <person name="Watt S.A."/>
            <person name="Weisshaar B."/>
            <person name="Becker A."/>
            <person name="Niehaus K."/>
            <person name="Puehler A."/>
        </authorList>
    </citation>
    <scope>NUCLEOTIDE SEQUENCE [LARGE SCALE GENOMIC DNA]</scope>
    <source>
        <strain>B100</strain>
    </source>
</reference>
<keyword id="KW-0963">Cytoplasm</keyword>
<keyword id="KW-0620">Polyamine biosynthesis</keyword>
<keyword id="KW-0745">Spermidine biosynthesis</keyword>
<keyword id="KW-0808">Transferase</keyword>
<comment type="function">
    <text evidence="1">Catalyzes the irreversible transfer of a propylamine group from the amino donor S-adenosylmethioninamine (decarboxy-AdoMet) to putrescine (1,4-diaminobutane) to yield spermidine.</text>
</comment>
<comment type="catalytic activity">
    <reaction evidence="1">
        <text>S-adenosyl 3-(methylsulfanyl)propylamine + putrescine = S-methyl-5'-thioadenosine + spermidine + H(+)</text>
        <dbReference type="Rhea" id="RHEA:12721"/>
        <dbReference type="ChEBI" id="CHEBI:15378"/>
        <dbReference type="ChEBI" id="CHEBI:17509"/>
        <dbReference type="ChEBI" id="CHEBI:57443"/>
        <dbReference type="ChEBI" id="CHEBI:57834"/>
        <dbReference type="ChEBI" id="CHEBI:326268"/>
        <dbReference type="EC" id="2.5.1.16"/>
    </reaction>
</comment>
<comment type="pathway">
    <text evidence="1">Amine and polyamine biosynthesis; spermidine biosynthesis; spermidine from putrescine: step 1/1.</text>
</comment>
<comment type="subunit">
    <text evidence="1">Homodimer or homotetramer.</text>
</comment>
<comment type="subcellular location">
    <subcellularLocation>
        <location evidence="1">Cytoplasm</location>
    </subcellularLocation>
</comment>
<comment type="similarity">
    <text evidence="1">Belongs to the spermidine/spermine synthase family.</text>
</comment>
<protein>
    <recommendedName>
        <fullName evidence="1">Polyamine aminopropyltransferase</fullName>
    </recommendedName>
    <alternativeName>
        <fullName evidence="1">Putrescine aminopropyltransferase</fullName>
        <shortName evidence="1">PAPT</shortName>
    </alternativeName>
    <alternativeName>
        <fullName evidence="1">Spermidine synthase</fullName>
        <shortName evidence="1">SPDS</shortName>
        <shortName evidence="1">SPDSY</shortName>
        <ecNumber evidence="1">2.5.1.16</ecNumber>
    </alternativeName>
</protein>